<comment type="function">
    <text evidence="1">Catalyzes the N-acylation of UDP-3-O-acylglucosamine using 3-hydroxyacyl-ACP as the acyl donor. Is involved in the biosynthesis of lipid A, a phosphorylated glycolipid that anchors the lipopolysaccharide to the outer membrane of the cell.</text>
</comment>
<comment type="catalytic activity">
    <reaction evidence="1">
        <text>a UDP-3-O-[(3R)-3-hydroxyacyl]-alpha-D-glucosamine + a (3R)-hydroxyacyl-[ACP] = a UDP-2-N,3-O-bis[(3R)-3-hydroxyacyl]-alpha-D-glucosamine + holo-[ACP] + H(+)</text>
        <dbReference type="Rhea" id="RHEA:53836"/>
        <dbReference type="Rhea" id="RHEA-COMP:9685"/>
        <dbReference type="Rhea" id="RHEA-COMP:9945"/>
        <dbReference type="ChEBI" id="CHEBI:15378"/>
        <dbReference type="ChEBI" id="CHEBI:64479"/>
        <dbReference type="ChEBI" id="CHEBI:78827"/>
        <dbReference type="ChEBI" id="CHEBI:137740"/>
        <dbReference type="ChEBI" id="CHEBI:137748"/>
        <dbReference type="EC" id="2.3.1.191"/>
    </reaction>
</comment>
<comment type="pathway">
    <text evidence="1">Bacterial outer membrane biogenesis; LPS lipid A biosynthesis.</text>
</comment>
<comment type="subunit">
    <text evidence="1">Homotrimer.</text>
</comment>
<comment type="similarity">
    <text evidence="1">Belongs to the transferase hexapeptide repeat family. LpxD subfamily.</text>
</comment>
<accession>Q0BN22</accession>
<feature type="chain" id="PRO_0000264371" description="UDP-3-O-acylglucosamine N-acyltransferase 2">
    <location>
        <begin position="1"/>
        <end position="337"/>
    </location>
</feature>
<feature type="active site" description="Proton acceptor" evidence="1">
    <location>
        <position position="238"/>
    </location>
</feature>
<keyword id="KW-0012">Acyltransferase</keyword>
<keyword id="KW-0441">Lipid A biosynthesis</keyword>
<keyword id="KW-0444">Lipid biosynthesis</keyword>
<keyword id="KW-0443">Lipid metabolism</keyword>
<keyword id="KW-0677">Repeat</keyword>
<keyword id="KW-0808">Transferase</keyword>
<reference key="1">
    <citation type="journal article" date="2006" name="J. Bacteriol.">
        <title>Chromosome rearrangement and diversification of Francisella tularensis revealed by the type B (OSU18) genome sequence.</title>
        <authorList>
            <person name="Petrosino J.F."/>
            <person name="Xiang Q."/>
            <person name="Karpathy S.E."/>
            <person name="Jiang H."/>
            <person name="Yerrapragada S."/>
            <person name="Liu Y."/>
            <person name="Gioia J."/>
            <person name="Hemphill L."/>
            <person name="Gonzalez A."/>
            <person name="Raghavan T.M."/>
            <person name="Uzman A."/>
            <person name="Fox G.E."/>
            <person name="Highlander S."/>
            <person name="Reichard M."/>
            <person name="Morton R.J."/>
            <person name="Clinkenbeard K.D."/>
            <person name="Weinstock G.M."/>
        </authorList>
    </citation>
    <scope>NUCLEOTIDE SEQUENCE [LARGE SCALE GENOMIC DNA]</scope>
    <source>
        <strain>OSU18</strain>
    </source>
</reference>
<evidence type="ECO:0000255" key="1">
    <source>
        <dbReference type="HAMAP-Rule" id="MF_00523"/>
    </source>
</evidence>
<dbReference type="EC" id="2.3.1.191" evidence="1"/>
<dbReference type="EMBL" id="CP000437">
    <property type="protein sequence ID" value="ABI82512.1"/>
    <property type="molecule type" value="Genomic_DNA"/>
</dbReference>
<dbReference type="SMR" id="Q0BN22"/>
<dbReference type="KEGG" id="fth:FTH_0539"/>
<dbReference type="UniPathway" id="UPA00973"/>
<dbReference type="GO" id="GO:0016020">
    <property type="term" value="C:membrane"/>
    <property type="evidence" value="ECO:0007669"/>
    <property type="project" value="GOC"/>
</dbReference>
<dbReference type="GO" id="GO:0016410">
    <property type="term" value="F:N-acyltransferase activity"/>
    <property type="evidence" value="ECO:0007669"/>
    <property type="project" value="InterPro"/>
</dbReference>
<dbReference type="GO" id="GO:0009245">
    <property type="term" value="P:lipid A biosynthetic process"/>
    <property type="evidence" value="ECO:0007669"/>
    <property type="project" value="UniProtKB-UniRule"/>
</dbReference>
<dbReference type="CDD" id="cd03352">
    <property type="entry name" value="LbH_LpxD"/>
    <property type="match status" value="1"/>
</dbReference>
<dbReference type="Gene3D" id="2.160.10.10">
    <property type="entry name" value="Hexapeptide repeat proteins"/>
    <property type="match status" value="1"/>
</dbReference>
<dbReference type="Gene3D" id="3.40.1390.10">
    <property type="entry name" value="MurE/MurF, N-terminal domain"/>
    <property type="match status" value="1"/>
</dbReference>
<dbReference type="HAMAP" id="MF_00523">
    <property type="entry name" value="LpxD"/>
    <property type="match status" value="1"/>
</dbReference>
<dbReference type="InterPro" id="IPR001451">
    <property type="entry name" value="Hexapep"/>
</dbReference>
<dbReference type="InterPro" id="IPR018357">
    <property type="entry name" value="Hexapep_transf_CS"/>
</dbReference>
<dbReference type="InterPro" id="IPR007691">
    <property type="entry name" value="LpxD"/>
</dbReference>
<dbReference type="InterPro" id="IPR011004">
    <property type="entry name" value="Trimer_LpxA-like_sf"/>
</dbReference>
<dbReference type="InterPro" id="IPR020573">
    <property type="entry name" value="UDP_GlcNAc_AcTrfase_non-rep"/>
</dbReference>
<dbReference type="NCBIfam" id="TIGR01853">
    <property type="entry name" value="lipid_A_lpxD"/>
    <property type="match status" value="1"/>
</dbReference>
<dbReference type="NCBIfam" id="NF002060">
    <property type="entry name" value="PRK00892.1"/>
    <property type="match status" value="1"/>
</dbReference>
<dbReference type="PANTHER" id="PTHR43378">
    <property type="entry name" value="UDP-3-O-ACYLGLUCOSAMINE N-ACYLTRANSFERASE"/>
    <property type="match status" value="1"/>
</dbReference>
<dbReference type="PANTHER" id="PTHR43378:SF2">
    <property type="entry name" value="UDP-3-O-ACYLGLUCOSAMINE N-ACYLTRANSFERASE 1, MITOCHONDRIAL-RELATED"/>
    <property type="match status" value="1"/>
</dbReference>
<dbReference type="Pfam" id="PF00132">
    <property type="entry name" value="Hexapep"/>
    <property type="match status" value="2"/>
</dbReference>
<dbReference type="Pfam" id="PF14602">
    <property type="entry name" value="Hexapep_2"/>
    <property type="match status" value="1"/>
</dbReference>
<dbReference type="Pfam" id="PF04613">
    <property type="entry name" value="LpxD"/>
    <property type="match status" value="1"/>
</dbReference>
<dbReference type="SUPFAM" id="SSF51161">
    <property type="entry name" value="Trimeric LpxA-like enzymes"/>
    <property type="match status" value="1"/>
</dbReference>
<dbReference type="PROSITE" id="PS00101">
    <property type="entry name" value="HEXAPEP_TRANSFERASES"/>
    <property type="match status" value="2"/>
</dbReference>
<sequence>MYSLDFLASKLDGEVKGDKNVEIKKIATLSQAGEGDISFCTNPKYLKALSETKASAVLITEEVLEFCNTNAVVLSNPYMALAKVMELFDKSPRPDGKIHSKAVIAASAIIGENVTIGANAVVGENVVIGDNVYIGACATIDNGTKIGNDTLIKSNVSIAHDVVIGTGCIIHQNAVIGCDGFGNARDEDGSWTKIPQLGRVIIEDDVEIGSGTTVDRGAIDDTIIKKGARIDNLVQIAHNVVIGRNTALAGVTAVAGSTTIGDNCLIGGQSAITGHISICDNTIIGGASNIGKSITKPGMYYAAFEAKPRIQWGRFVAKLAKIDTLITKVKQLEEKIK</sequence>
<gene>
    <name evidence="1" type="primary">lpxD2</name>
    <name type="ordered locus">FTH_0539</name>
</gene>
<name>LPXD2_FRATO</name>
<proteinExistence type="inferred from homology"/>
<organism>
    <name type="scientific">Francisella tularensis subsp. holarctica (strain OSU18)</name>
    <dbReference type="NCBI Taxonomy" id="393011"/>
    <lineage>
        <taxon>Bacteria</taxon>
        <taxon>Pseudomonadati</taxon>
        <taxon>Pseudomonadota</taxon>
        <taxon>Gammaproteobacteria</taxon>
        <taxon>Thiotrichales</taxon>
        <taxon>Francisellaceae</taxon>
        <taxon>Francisella</taxon>
    </lineage>
</organism>
<protein>
    <recommendedName>
        <fullName evidence="1">UDP-3-O-acylglucosamine N-acyltransferase 2</fullName>
        <ecNumber evidence="1">2.3.1.191</ecNumber>
    </recommendedName>
</protein>